<keyword id="KW-0687">Ribonucleoprotein</keyword>
<keyword id="KW-0689">Ribosomal protein</keyword>
<accession>B2UY96</accession>
<dbReference type="EMBL" id="CP001078">
    <property type="protein sequence ID" value="ACD51548.1"/>
    <property type="molecule type" value="Genomic_DNA"/>
</dbReference>
<dbReference type="RefSeq" id="WP_012449883.1">
    <property type="nucleotide sequence ID" value="NC_010723.1"/>
</dbReference>
<dbReference type="SMR" id="B2UY96"/>
<dbReference type="KEGG" id="cbt:CLH_0223"/>
<dbReference type="HOGENOM" id="CLU_190949_0_2_9"/>
<dbReference type="GO" id="GO:0005737">
    <property type="term" value="C:cytoplasm"/>
    <property type="evidence" value="ECO:0007669"/>
    <property type="project" value="UniProtKB-ARBA"/>
</dbReference>
<dbReference type="GO" id="GO:1990904">
    <property type="term" value="C:ribonucleoprotein complex"/>
    <property type="evidence" value="ECO:0007669"/>
    <property type="project" value="UniProtKB-KW"/>
</dbReference>
<dbReference type="GO" id="GO:0005840">
    <property type="term" value="C:ribosome"/>
    <property type="evidence" value="ECO:0007669"/>
    <property type="project" value="UniProtKB-KW"/>
</dbReference>
<dbReference type="GO" id="GO:0003735">
    <property type="term" value="F:structural constituent of ribosome"/>
    <property type="evidence" value="ECO:0007669"/>
    <property type="project" value="InterPro"/>
</dbReference>
<dbReference type="GO" id="GO:0006412">
    <property type="term" value="P:translation"/>
    <property type="evidence" value="ECO:0007669"/>
    <property type="project" value="UniProtKB-UniRule"/>
</dbReference>
<dbReference type="Gene3D" id="2.20.28.120">
    <property type="entry name" value="Ribosomal protein L33"/>
    <property type="match status" value="1"/>
</dbReference>
<dbReference type="HAMAP" id="MF_00294">
    <property type="entry name" value="Ribosomal_bL33"/>
    <property type="match status" value="1"/>
</dbReference>
<dbReference type="InterPro" id="IPR001705">
    <property type="entry name" value="Ribosomal_bL33"/>
</dbReference>
<dbReference type="InterPro" id="IPR018264">
    <property type="entry name" value="Ribosomal_bL33_CS"/>
</dbReference>
<dbReference type="InterPro" id="IPR038584">
    <property type="entry name" value="Ribosomal_bL33_sf"/>
</dbReference>
<dbReference type="InterPro" id="IPR011332">
    <property type="entry name" value="Ribosomal_zn-bd"/>
</dbReference>
<dbReference type="NCBIfam" id="NF001764">
    <property type="entry name" value="PRK00504.1"/>
    <property type="match status" value="1"/>
</dbReference>
<dbReference type="NCBIfam" id="NF001860">
    <property type="entry name" value="PRK00595.1"/>
    <property type="match status" value="1"/>
</dbReference>
<dbReference type="NCBIfam" id="TIGR01023">
    <property type="entry name" value="rpmG_bact"/>
    <property type="match status" value="1"/>
</dbReference>
<dbReference type="PANTHER" id="PTHR43168">
    <property type="entry name" value="50S RIBOSOMAL PROTEIN L33, CHLOROPLASTIC"/>
    <property type="match status" value="1"/>
</dbReference>
<dbReference type="PANTHER" id="PTHR43168:SF2">
    <property type="entry name" value="LARGE RIBOSOMAL SUBUNIT PROTEIN BL33C"/>
    <property type="match status" value="1"/>
</dbReference>
<dbReference type="Pfam" id="PF00471">
    <property type="entry name" value="Ribosomal_L33"/>
    <property type="match status" value="1"/>
</dbReference>
<dbReference type="SUPFAM" id="SSF57829">
    <property type="entry name" value="Zn-binding ribosomal proteins"/>
    <property type="match status" value="1"/>
</dbReference>
<dbReference type="PROSITE" id="PS00582">
    <property type="entry name" value="RIBOSOMAL_L33"/>
    <property type="match status" value="1"/>
</dbReference>
<gene>
    <name evidence="1" type="primary">rpmG</name>
    <name type="ordered locus">CLH_0223</name>
</gene>
<evidence type="ECO:0000255" key="1">
    <source>
        <dbReference type="HAMAP-Rule" id="MF_00294"/>
    </source>
</evidence>
<evidence type="ECO:0000305" key="2"/>
<name>RL33_CLOBA</name>
<reference key="1">
    <citation type="submission" date="2008-05" db="EMBL/GenBank/DDBJ databases">
        <title>Complete genome sequence of Clostridium botulinum E3 str. Alaska E43.</title>
        <authorList>
            <person name="Brinkac L.M."/>
            <person name="Brown J.L."/>
            <person name="Bruce D."/>
            <person name="Detter C."/>
            <person name="Munk C."/>
            <person name="Smith L.A."/>
            <person name="Smith T.J."/>
            <person name="Sutton G."/>
            <person name="Brettin T.S."/>
        </authorList>
    </citation>
    <scope>NUCLEOTIDE SEQUENCE [LARGE SCALE GENOMIC DNA]</scope>
    <source>
        <strain>Alaska E43 / Type E3</strain>
    </source>
</reference>
<comment type="similarity">
    <text evidence="1">Belongs to the bacterial ribosomal protein bL33 family.</text>
</comment>
<sequence>MRTKITLACTECKQRNYDSMKNKKNNPDRLEMNKYCRFCKKHTLHRETK</sequence>
<organism>
    <name type="scientific">Clostridium botulinum (strain Alaska E43 / Type E3)</name>
    <dbReference type="NCBI Taxonomy" id="508767"/>
    <lineage>
        <taxon>Bacteria</taxon>
        <taxon>Bacillati</taxon>
        <taxon>Bacillota</taxon>
        <taxon>Clostridia</taxon>
        <taxon>Eubacteriales</taxon>
        <taxon>Clostridiaceae</taxon>
        <taxon>Clostridium</taxon>
    </lineage>
</organism>
<protein>
    <recommendedName>
        <fullName evidence="1">Large ribosomal subunit protein bL33</fullName>
    </recommendedName>
    <alternativeName>
        <fullName evidence="2">50S ribosomal protein L33</fullName>
    </alternativeName>
</protein>
<proteinExistence type="inferred from homology"/>
<feature type="chain" id="PRO_0000356431" description="Large ribosomal subunit protein bL33">
    <location>
        <begin position="1"/>
        <end position="49"/>
    </location>
</feature>